<feature type="chain" id="PRO_1000186407" description="Bifunctional protein GlmU">
    <location>
        <begin position="1"/>
        <end position="460"/>
    </location>
</feature>
<feature type="region of interest" description="Pyrophosphorylase" evidence="1">
    <location>
        <begin position="1"/>
        <end position="235"/>
    </location>
</feature>
<feature type="region of interest" description="Linker" evidence="1">
    <location>
        <begin position="236"/>
        <end position="256"/>
    </location>
</feature>
<feature type="region of interest" description="N-acetyltransferase" evidence="1">
    <location>
        <begin position="257"/>
        <end position="460"/>
    </location>
</feature>
<feature type="active site" description="Proton acceptor" evidence="1">
    <location>
        <position position="368"/>
    </location>
</feature>
<feature type="binding site" evidence="1">
    <location>
        <begin position="9"/>
        <end position="12"/>
    </location>
    <ligand>
        <name>UDP-N-acetyl-alpha-D-glucosamine</name>
        <dbReference type="ChEBI" id="CHEBI:57705"/>
    </ligand>
</feature>
<feature type="binding site" evidence="1">
    <location>
        <position position="23"/>
    </location>
    <ligand>
        <name>UDP-N-acetyl-alpha-D-glucosamine</name>
        <dbReference type="ChEBI" id="CHEBI:57705"/>
    </ligand>
</feature>
<feature type="binding site" evidence="1">
    <location>
        <position position="76"/>
    </location>
    <ligand>
        <name>UDP-N-acetyl-alpha-D-glucosamine</name>
        <dbReference type="ChEBI" id="CHEBI:57705"/>
    </ligand>
</feature>
<feature type="binding site" evidence="1">
    <location>
        <begin position="81"/>
        <end position="82"/>
    </location>
    <ligand>
        <name>UDP-N-acetyl-alpha-D-glucosamine</name>
        <dbReference type="ChEBI" id="CHEBI:57705"/>
    </ligand>
</feature>
<feature type="binding site" evidence="1">
    <location>
        <position position="109"/>
    </location>
    <ligand>
        <name>Mg(2+)</name>
        <dbReference type="ChEBI" id="CHEBI:18420"/>
    </ligand>
</feature>
<feature type="binding site" evidence="1">
    <location>
        <position position="146"/>
    </location>
    <ligand>
        <name>UDP-N-acetyl-alpha-D-glucosamine</name>
        <dbReference type="ChEBI" id="CHEBI:57705"/>
    </ligand>
</feature>
<feature type="binding site" evidence="1">
    <location>
        <position position="161"/>
    </location>
    <ligand>
        <name>UDP-N-acetyl-alpha-D-glucosamine</name>
        <dbReference type="ChEBI" id="CHEBI:57705"/>
    </ligand>
</feature>
<feature type="binding site" evidence="1">
    <location>
        <position position="176"/>
    </location>
    <ligand>
        <name>UDP-N-acetyl-alpha-D-glucosamine</name>
        <dbReference type="ChEBI" id="CHEBI:57705"/>
    </ligand>
</feature>
<feature type="binding site" evidence="1">
    <location>
        <position position="233"/>
    </location>
    <ligand>
        <name>Mg(2+)</name>
        <dbReference type="ChEBI" id="CHEBI:18420"/>
    </ligand>
</feature>
<feature type="binding site" evidence="1">
    <location>
        <position position="233"/>
    </location>
    <ligand>
        <name>UDP-N-acetyl-alpha-D-glucosamine</name>
        <dbReference type="ChEBI" id="CHEBI:57705"/>
    </ligand>
</feature>
<feature type="binding site" evidence="1">
    <location>
        <position position="338"/>
    </location>
    <ligand>
        <name>UDP-N-acetyl-alpha-D-glucosamine</name>
        <dbReference type="ChEBI" id="CHEBI:57705"/>
    </ligand>
</feature>
<feature type="binding site" evidence="1">
    <location>
        <position position="356"/>
    </location>
    <ligand>
        <name>UDP-N-acetyl-alpha-D-glucosamine</name>
        <dbReference type="ChEBI" id="CHEBI:57705"/>
    </ligand>
</feature>
<feature type="binding site" evidence="1">
    <location>
        <position position="371"/>
    </location>
    <ligand>
        <name>UDP-N-acetyl-alpha-D-glucosamine</name>
        <dbReference type="ChEBI" id="CHEBI:57705"/>
    </ligand>
</feature>
<feature type="binding site" evidence="1">
    <location>
        <position position="382"/>
    </location>
    <ligand>
        <name>UDP-N-acetyl-alpha-D-glucosamine</name>
        <dbReference type="ChEBI" id="CHEBI:57705"/>
    </ligand>
</feature>
<feature type="binding site" evidence="1">
    <location>
        <begin position="391"/>
        <end position="392"/>
    </location>
    <ligand>
        <name>acetyl-CoA</name>
        <dbReference type="ChEBI" id="CHEBI:57288"/>
    </ligand>
</feature>
<feature type="binding site" evidence="1">
    <location>
        <position position="428"/>
    </location>
    <ligand>
        <name>acetyl-CoA</name>
        <dbReference type="ChEBI" id="CHEBI:57288"/>
    </ligand>
</feature>
<reference key="1">
    <citation type="journal article" date="2008" name="Proc. Natl. Acad. Sci. U.S.A.">
        <title>The genome sequence of Bifidobacterium longum subsp. infantis reveals adaptations for milk utilization within the infant microbiome.</title>
        <authorList>
            <person name="Sela D.A."/>
            <person name="Chapman J."/>
            <person name="Adeuya A."/>
            <person name="Kim J.H."/>
            <person name="Chen F."/>
            <person name="Whitehead T.R."/>
            <person name="Lapidus A."/>
            <person name="Rokhsar D.S."/>
            <person name="Lebrilla C.B."/>
            <person name="German J.B."/>
            <person name="Price N.P."/>
            <person name="Richardson P.M."/>
            <person name="Mills D.A."/>
        </authorList>
    </citation>
    <scope>NUCLEOTIDE SEQUENCE [LARGE SCALE GENOMIC DNA]</scope>
    <source>
        <strain>ATCC 15697 / DSM 20088 / JCM 1222 / NCTC 11817 / S12</strain>
    </source>
</reference>
<reference key="2">
    <citation type="journal article" date="2011" name="Nature">
        <title>Bifidobacteria can protect from enteropathogenic infection through production of acetate.</title>
        <authorList>
            <person name="Fukuda S."/>
            <person name="Toh H."/>
            <person name="Hase K."/>
            <person name="Oshima K."/>
            <person name="Nakanishi Y."/>
            <person name="Yoshimura K."/>
            <person name="Tobe T."/>
            <person name="Clarke J.M."/>
            <person name="Topping D.L."/>
            <person name="Suzuki T."/>
            <person name="Taylor T.D."/>
            <person name="Itoh K."/>
            <person name="Kikuchi J."/>
            <person name="Morita H."/>
            <person name="Hattori M."/>
            <person name="Ohno H."/>
        </authorList>
    </citation>
    <scope>NUCLEOTIDE SEQUENCE [LARGE SCALE GENOMIC DNA]</scope>
    <source>
        <strain>ATCC 15697 / DSM 20088 / JCM 1222 / NCTC 11817 / S12</strain>
    </source>
</reference>
<comment type="function">
    <text evidence="1">Catalyzes the last two sequential reactions in the de novo biosynthetic pathway for UDP-N-acetylglucosamine (UDP-GlcNAc). The C-terminal domain catalyzes the transfer of acetyl group from acetyl coenzyme A to glucosamine-1-phosphate (GlcN-1-P) to produce N-acetylglucosamine-1-phosphate (GlcNAc-1-P), which is converted into UDP-GlcNAc by the transfer of uridine 5-monophosphate (from uridine 5-triphosphate), a reaction catalyzed by the N-terminal domain.</text>
</comment>
<comment type="catalytic activity">
    <reaction evidence="1">
        <text>alpha-D-glucosamine 1-phosphate + acetyl-CoA = N-acetyl-alpha-D-glucosamine 1-phosphate + CoA + H(+)</text>
        <dbReference type="Rhea" id="RHEA:13725"/>
        <dbReference type="ChEBI" id="CHEBI:15378"/>
        <dbReference type="ChEBI" id="CHEBI:57287"/>
        <dbReference type="ChEBI" id="CHEBI:57288"/>
        <dbReference type="ChEBI" id="CHEBI:57776"/>
        <dbReference type="ChEBI" id="CHEBI:58516"/>
        <dbReference type="EC" id="2.3.1.157"/>
    </reaction>
</comment>
<comment type="catalytic activity">
    <reaction evidence="1">
        <text>N-acetyl-alpha-D-glucosamine 1-phosphate + UTP + H(+) = UDP-N-acetyl-alpha-D-glucosamine + diphosphate</text>
        <dbReference type="Rhea" id="RHEA:13509"/>
        <dbReference type="ChEBI" id="CHEBI:15378"/>
        <dbReference type="ChEBI" id="CHEBI:33019"/>
        <dbReference type="ChEBI" id="CHEBI:46398"/>
        <dbReference type="ChEBI" id="CHEBI:57705"/>
        <dbReference type="ChEBI" id="CHEBI:57776"/>
        <dbReference type="EC" id="2.7.7.23"/>
    </reaction>
</comment>
<comment type="cofactor">
    <cofactor evidence="1">
        <name>Mg(2+)</name>
        <dbReference type="ChEBI" id="CHEBI:18420"/>
    </cofactor>
    <text evidence="1">Binds 1 Mg(2+) ion per subunit.</text>
</comment>
<comment type="pathway">
    <text evidence="1">Nucleotide-sugar biosynthesis; UDP-N-acetyl-alpha-D-glucosamine biosynthesis; N-acetyl-alpha-D-glucosamine 1-phosphate from alpha-D-glucosamine 6-phosphate (route II): step 2/2.</text>
</comment>
<comment type="pathway">
    <text evidence="1">Nucleotide-sugar biosynthesis; UDP-N-acetyl-alpha-D-glucosamine biosynthesis; UDP-N-acetyl-alpha-D-glucosamine from N-acetyl-alpha-D-glucosamine 1-phosphate: step 1/1.</text>
</comment>
<comment type="pathway">
    <text evidence="1">Bacterial outer membrane biogenesis; LPS lipid A biosynthesis.</text>
</comment>
<comment type="subunit">
    <text evidence="1">Homotrimer.</text>
</comment>
<comment type="subcellular location">
    <subcellularLocation>
        <location evidence="1">Cytoplasm</location>
    </subcellularLocation>
</comment>
<comment type="similarity">
    <text evidence="1">In the N-terminal section; belongs to the N-acetylglucosamine-1-phosphate uridyltransferase family.</text>
</comment>
<comment type="similarity">
    <text evidence="1">In the C-terminal section; belongs to the transferase hexapeptide repeat family.</text>
</comment>
<keyword id="KW-0012">Acyltransferase</keyword>
<keyword id="KW-0133">Cell shape</keyword>
<keyword id="KW-0961">Cell wall biogenesis/degradation</keyword>
<keyword id="KW-0963">Cytoplasm</keyword>
<keyword id="KW-0460">Magnesium</keyword>
<keyword id="KW-0479">Metal-binding</keyword>
<keyword id="KW-0511">Multifunctional enzyme</keyword>
<keyword id="KW-0548">Nucleotidyltransferase</keyword>
<keyword id="KW-0573">Peptidoglycan synthesis</keyword>
<keyword id="KW-0677">Repeat</keyword>
<keyword id="KW-0808">Transferase</keyword>
<evidence type="ECO:0000255" key="1">
    <source>
        <dbReference type="HAMAP-Rule" id="MF_01631"/>
    </source>
</evidence>
<organism>
    <name type="scientific">Bifidobacterium longum subsp. infantis (strain ATCC 15697 / DSM 20088 / JCM 1222 / NCTC 11817 / S12)</name>
    <dbReference type="NCBI Taxonomy" id="391904"/>
    <lineage>
        <taxon>Bacteria</taxon>
        <taxon>Bacillati</taxon>
        <taxon>Actinomycetota</taxon>
        <taxon>Actinomycetes</taxon>
        <taxon>Bifidobacteriales</taxon>
        <taxon>Bifidobacteriaceae</taxon>
        <taxon>Bifidobacterium</taxon>
    </lineage>
</organism>
<gene>
    <name evidence="1" type="primary">glmU</name>
    <name type="ordered locus">Blon_1727</name>
    <name type="ordered locus">BLIJ_1788</name>
</gene>
<proteinExistence type="inferred from homology"/>
<protein>
    <recommendedName>
        <fullName evidence="1">Bifunctional protein GlmU</fullName>
    </recommendedName>
    <domain>
        <recommendedName>
            <fullName evidence="1">UDP-N-acetylglucosamine pyrophosphorylase</fullName>
            <ecNumber evidence="1">2.7.7.23</ecNumber>
        </recommendedName>
        <alternativeName>
            <fullName evidence="1">N-acetylglucosamine-1-phosphate uridyltransferase</fullName>
        </alternativeName>
    </domain>
    <domain>
        <recommendedName>
            <fullName evidence="1">Glucosamine-1-phosphate N-acetyltransferase</fullName>
            <ecNumber evidence="1">2.3.1.157</ecNumber>
        </recommendedName>
    </domain>
</protein>
<dbReference type="EC" id="2.7.7.23" evidence="1"/>
<dbReference type="EC" id="2.3.1.157" evidence="1"/>
<dbReference type="EMBL" id="CP001095">
    <property type="protein sequence ID" value="ACJ52802.1"/>
    <property type="molecule type" value="Genomic_DNA"/>
</dbReference>
<dbReference type="EMBL" id="AP010889">
    <property type="protein sequence ID" value="BAJ69368.1"/>
    <property type="molecule type" value="Genomic_DNA"/>
</dbReference>
<dbReference type="RefSeq" id="WP_012578026.1">
    <property type="nucleotide sequence ID" value="NC_011593.1"/>
</dbReference>
<dbReference type="SMR" id="B7GSX2"/>
<dbReference type="KEGG" id="bln:Blon_1727"/>
<dbReference type="KEGG" id="blon:BLIJ_1788"/>
<dbReference type="PATRIC" id="fig|391904.8.peg.1797"/>
<dbReference type="HOGENOM" id="CLU_029499_15_2_11"/>
<dbReference type="UniPathway" id="UPA00113">
    <property type="reaction ID" value="UER00532"/>
</dbReference>
<dbReference type="UniPathway" id="UPA00113">
    <property type="reaction ID" value="UER00533"/>
</dbReference>
<dbReference type="UniPathway" id="UPA00973"/>
<dbReference type="Proteomes" id="UP000001360">
    <property type="component" value="Chromosome"/>
</dbReference>
<dbReference type="GO" id="GO:0005737">
    <property type="term" value="C:cytoplasm"/>
    <property type="evidence" value="ECO:0007669"/>
    <property type="project" value="UniProtKB-SubCell"/>
</dbReference>
<dbReference type="GO" id="GO:0016020">
    <property type="term" value="C:membrane"/>
    <property type="evidence" value="ECO:0007669"/>
    <property type="project" value="GOC"/>
</dbReference>
<dbReference type="GO" id="GO:0019134">
    <property type="term" value="F:glucosamine-1-phosphate N-acetyltransferase activity"/>
    <property type="evidence" value="ECO:0007669"/>
    <property type="project" value="UniProtKB-UniRule"/>
</dbReference>
<dbReference type="GO" id="GO:0000287">
    <property type="term" value="F:magnesium ion binding"/>
    <property type="evidence" value="ECO:0007669"/>
    <property type="project" value="UniProtKB-UniRule"/>
</dbReference>
<dbReference type="GO" id="GO:0003977">
    <property type="term" value="F:UDP-N-acetylglucosamine diphosphorylase activity"/>
    <property type="evidence" value="ECO:0007669"/>
    <property type="project" value="UniProtKB-UniRule"/>
</dbReference>
<dbReference type="GO" id="GO:0000902">
    <property type="term" value="P:cell morphogenesis"/>
    <property type="evidence" value="ECO:0007669"/>
    <property type="project" value="UniProtKB-UniRule"/>
</dbReference>
<dbReference type="GO" id="GO:0071555">
    <property type="term" value="P:cell wall organization"/>
    <property type="evidence" value="ECO:0007669"/>
    <property type="project" value="UniProtKB-KW"/>
</dbReference>
<dbReference type="GO" id="GO:0009245">
    <property type="term" value="P:lipid A biosynthetic process"/>
    <property type="evidence" value="ECO:0007669"/>
    <property type="project" value="UniProtKB-UniRule"/>
</dbReference>
<dbReference type="GO" id="GO:0009252">
    <property type="term" value="P:peptidoglycan biosynthetic process"/>
    <property type="evidence" value="ECO:0007669"/>
    <property type="project" value="UniProtKB-UniRule"/>
</dbReference>
<dbReference type="GO" id="GO:0008360">
    <property type="term" value="P:regulation of cell shape"/>
    <property type="evidence" value="ECO:0007669"/>
    <property type="project" value="UniProtKB-KW"/>
</dbReference>
<dbReference type="GO" id="GO:0006048">
    <property type="term" value="P:UDP-N-acetylglucosamine biosynthetic process"/>
    <property type="evidence" value="ECO:0007669"/>
    <property type="project" value="UniProtKB-UniPathway"/>
</dbReference>
<dbReference type="CDD" id="cd02540">
    <property type="entry name" value="GT2_GlmU_N_bac"/>
    <property type="match status" value="1"/>
</dbReference>
<dbReference type="CDD" id="cd03353">
    <property type="entry name" value="LbH_GlmU_C"/>
    <property type="match status" value="1"/>
</dbReference>
<dbReference type="Gene3D" id="2.160.10.10">
    <property type="entry name" value="Hexapeptide repeat proteins"/>
    <property type="match status" value="1"/>
</dbReference>
<dbReference type="Gene3D" id="3.90.550.10">
    <property type="entry name" value="Spore Coat Polysaccharide Biosynthesis Protein SpsA, Chain A"/>
    <property type="match status" value="1"/>
</dbReference>
<dbReference type="HAMAP" id="MF_01631">
    <property type="entry name" value="GlmU"/>
    <property type="match status" value="1"/>
</dbReference>
<dbReference type="InterPro" id="IPR005882">
    <property type="entry name" value="Bifunctional_GlmU"/>
</dbReference>
<dbReference type="InterPro" id="IPR050065">
    <property type="entry name" value="GlmU-like"/>
</dbReference>
<dbReference type="InterPro" id="IPR038009">
    <property type="entry name" value="GlmU_C_LbH"/>
</dbReference>
<dbReference type="InterPro" id="IPR001451">
    <property type="entry name" value="Hexapep"/>
</dbReference>
<dbReference type="InterPro" id="IPR025877">
    <property type="entry name" value="MobA-like_NTP_Trfase"/>
</dbReference>
<dbReference type="InterPro" id="IPR029044">
    <property type="entry name" value="Nucleotide-diphossugar_trans"/>
</dbReference>
<dbReference type="InterPro" id="IPR011004">
    <property type="entry name" value="Trimer_LpxA-like_sf"/>
</dbReference>
<dbReference type="NCBIfam" id="TIGR01173">
    <property type="entry name" value="glmU"/>
    <property type="match status" value="1"/>
</dbReference>
<dbReference type="NCBIfam" id="NF010932">
    <property type="entry name" value="PRK14352.1"/>
    <property type="match status" value="1"/>
</dbReference>
<dbReference type="PANTHER" id="PTHR43584:SF3">
    <property type="entry name" value="BIFUNCTIONAL PROTEIN GLMU"/>
    <property type="match status" value="1"/>
</dbReference>
<dbReference type="PANTHER" id="PTHR43584">
    <property type="entry name" value="NUCLEOTIDYL TRANSFERASE"/>
    <property type="match status" value="1"/>
</dbReference>
<dbReference type="Pfam" id="PF00132">
    <property type="entry name" value="Hexapep"/>
    <property type="match status" value="2"/>
</dbReference>
<dbReference type="Pfam" id="PF12804">
    <property type="entry name" value="NTP_transf_3"/>
    <property type="match status" value="1"/>
</dbReference>
<dbReference type="SUPFAM" id="SSF53448">
    <property type="entry name" value="Nucleotide-diphospho-sugar transferases"/>
    <property type="match status" value="1"/>
</dbReference>
<dbReference type="SUPFAM" id="SSF51161">
    <property type="entry name" value="Trimeric LpxA-like enzymes"/>
    <property type="match status" value="1"/>
</dbReference>
<name>GLMU_BIFLS</name>
<accession>B7GSX2</accession>
<accession>E8MLE1</accession>
<sequence length="460" mass="49281">MALSAAIVLAAGEGTRMRSNKPKVLHTFAGKTFLNRVMDSVAALNPDTLAVVVHFQAERVAEAARSYDEQVTIVNQDDIPGTGRAVQCAMAQLTESGKIDGPVLIAASDMPLLDSETLHRLVEFHTASGNGATVLTTILDDPTGYGRIIRDREGNVLRIVEQKDANRSELAVQEVNTSVYVFEASVLAEAIAGLKSNNAQGEFYLTDALETAKSAGKVGAFAAPDPLTVEGVNDRVQLAALSKTYNRRVCERWMRNGVTILDPETTWIEDDVRIGRDATILPGSFLQGHTVIGEDAVVGPYTTLIDATVDEGAVVERSRVQESHIGARTNIGPWTYLRVGNEFGEDAKAGAFVEMKKTHIGNGTKVPHLSYVGDARLGDHTNIGGGTITANYDGVHKNRTVIGDGCHVGAGNLFVAPVEVGDNVTTGAGSVVRHAVPDDTMVYSENTQHNVEGWKPAWER</sequence>